<reference key="1">
    <citation type="journal article" date="1999" name="Nature">
        <title>Sequence and analysis of chromosome 4 of the plant Arabidopsis thaliana.</title>
        <authorList>
            <person name="Mayer K.F.X."/>
            <person name="Schueller C."/>
            <person name="Wambutt R."/>
            <person name="Murphy G."/>
            <person name="Volckaert G."/>
            <person name="Pohl T."/>
            <person name="Duesterhoeft A."/>
            <person name="Stiekema W."/>
            <person name="Entian K.-D."/>
            <person name="Terryn N."/>
            <person name="Harris B."/>
            <person name="Ansorge W."/>
            <person name="Brandt P."/>
            <person name="Grivell L.A."/>
            <person name="Rieger M."/>
            <person name="Weichselgartner M."/>
            <person name="de Simone V."/>
            <person name="Obermaier B."/>
            <person name="Mache R."/>
            <person name="Mueller M."/>
            <person name="Kreis M."/>
            <person name="Delseny M."/>
            <person name="Puigdomenech P."/>
            <person name="Watson M."/>
            <person name="Schmidtheini T."/>
            <person name="Reichert B."/>
            <person name="Portetelle D."/>
            <person name="Perez-Alonso M."/>
            <person name="Boutry M."/>
            <person name="Bancroft I."/>
            <person name="Vos P."/>
            <person name="Hoheisel J."/>
            <person name="Zimmermann W."/>
            <person name="Wedler H."/>
            <person name="Ridley P."/>
            <person name="Langham S.-A."/>
            <person name="McCullagh B."/>
            <person name="Bilham L."/>
            <person name="Robben J."/>
            <person name="van der Schueren J."/>
            <person name="Grymonprez B."/>
            <person name="Chuang Y.-J."/>
            <person name="Vandenbussche F."/>
            <person name="Braeken M."/>
            <person name="Weltjens I."/>
            <person name="Voet M."/>
            <person name="Bastiaens I."/>
            <person name="Aert R."/>
            <person name="Defoor E."/>
            <person name="Weitzenegger T."/>
            <person name="Bothe G."/>
            <person name="Ramsperger U."/>
            <person name="Hilbert H."/>
            <person name="Braun M."/>
            <person name="Holzer E."/>
            <person name="Brandt A."/>
            <person name="Peters S."/>
            <person name="van Staveren M."/>
            <person name="Dirkse W."/>
            <person name="Mooijman P."/>
            <person name="Klein Lankhorst R."/>
            <person name="Rose M."/>
            <person name="Hauf J."/>
            <person name="Koetter P."/>
            <person name="Berneiser S."/>
            <person name="Hempel S."/>
            <person name="Feldpausch M."/>
            <person name="Lamberth S."/>
            <person name="Van den Daele H."/>
            <person name="De Keyser A."/>
            <person name="Buysshaert C."/>
            <person name="Gielen J."/>
            <person name="Villarroel R."/>
            <person name="De Clercq R."/>
            <person name="van Montagu M."/>
            <person name="Rogers J."/>
            <person name="Cronin A."/>
            <person name="Quail M.A."/>
            <person name="Bray-Allen S."/>
            <person name="Clark L."/>
            <person name="Doggett J."/>
            <person name="Hall S."/>
            <person name="Kay M."/>
            <person name="Lennard N."/>
            <person name="McLay K."/>
            <person name="Mayes R."/>
            <person name="Pettett A."/>
            <person name="Rajandream M.A."/>
            <person name="Lyne M."/>
            <person name="Benes V."/>
            <person name="Rechmann S."/>
            <person name="Borkova D."/>
            <person name="Bloecker H."/>
            <person name="Scharfe M."/>
            <person name="Grimm M."/>
            <person name="Loehnert T.-H."/>
            <person name="Dose S."/>
            <person name="de Haan M."/>
            <person name="Maarse A.C."/>
            <person name="Schaefer M."/>
            <person name="Mueller-Auer S."/>
            <person name="Gabel C."/>
            <person name="Fuchs M."/>
            <person name="Fartmann B."/>
            <person name="Granderath K."/>
            <person name="Dauner D."/>
            <person name="Herzl A."/>
            <person name="Neumann S."/>
            <person name="Argiriou A."/>
            <person name="Vitale D."/>
            <person name="Liguori R."/>
            <person name="Piravandi E."/>
            <person name="Massenet O."/>
            <person name="Quigley F."/>
            <person name="Clabauld G."/>
            <person name="Muendlein A."/>
            <person name="Felber R."/>
            <person name="Schnabl S."/>
            <person name="Hiller R."/>
            <person name="Schmidt W."/>
            <person name="Lecharny A."/>
            <person name="Aubourg S."/>
            <person name="Chefdor F."/>
            <person name="Cooke R."/>
            <person name="Berger C."/>
            <person name="Monfort A."/>
            <person name="Casacuberta E."/>
            <person name="Gibbons T."/>
            <person name="Weber N."/>
            <person name="Vandenbol M."/>
            <person name="Bargues M."/>
            <person name="Terol J."/>
            <person name="Torres A."/>
            <person name="Perez-Perez A."/>
            <person name="Purnelle B."/>
            <person name="Bent E."/>
            <person name="Johnson S."/>
            <person name="Tacon D."/>
            <person name="Jesse T."/>
            <person name="Heijnen L."/>
            <person name="Schwarz S."/>
            <person name="Scholler P."/>
            <person name="Heber S."/>
            <person name="Francs P."/>
            <person name="Bielke C."/>
            <person name="Frishman D."/>
            <person name="Haase D."/>
            <person name="Lemcke K."/>
            <person name="Mewes H.-W."/>
            <person name="Stocker S."/>
            <person name="Zaccaria P."/>
            <person name="Bevan M."/>
            <person name="Wilson R.K."/>
            <person name="de la Bastide M."/>
            <person name="Habermann K."/>
            <person name="Parnell L."/>
            <person name="Dedhia N."/>
            <person name="Gnoj L."/>
            <person name="Schutz K."/>
            <person name="Huang E."/>
            <person name="Spiegel L."/>
            <person name="Sekhon M."/>
            <person name="Murray J."/>
            <person name="Sheet P."/>
            <person name="Cordes M."/>
            <person name="Abu-Threideh J."/>
            <person name="Stoneking T."/>
            <person name="Kalicki J."/>
            <person name="Graves T."/>
            <person name="Harmon G."/>
            <person name="Edwards J."/>
            <person name="Latreille P."/>
            <person name="Courtney L."/>
            <person name="Cloud J."/>
            <person name="Abbott A."/>
            <person name="Scott K."/>
            <person name="Johnson D."/>
            <person name="Minx P."/>
            <person name="Bentley D."/>
            <person name="Fulton B."/>
            <person name="Miller N."/>
            <person name="Greco T."/>
            <person name="Kemp K."/>
            <person name="Kramer J."/>
            <person name="Fulton L."/>
            <person name="Mardis E."/>
            <person name="Dante M."/>
            <person name="Pepin K."/>
            <person name="Hillier L.W."/>
            <person name="Nelson J."/>
            <person name="Spieth J."/>
            <person name="Ryan E."/>
            <person name="Andrews S."/>
            <person name="Geisel C."/>
            <person name="Layman D."/>
            <person name="Du H."/>
            <person name="Ali J."/>
            <person name="Berghoff A."/>
            <person name="Jones K."/>
            <person name="Drone K."/>
            <person name="Cotton M."/>
            <person name="Joshu C."/>
            <person name="Antonoiu B."/>
            <person name="Zidanic M."/>
            <person name="Strong C."/>
            <person name="Sun H."/>
            <person name="Lamar B."/>
            <person name="Yordan C."/>
            <person name="Ma P."/>
            <person name="Zhong J."/>
            <person name="Preston R."/>
            <person name="Vil D."/>
            <person name="Shekher M."/>
            <person name="Matero A."/>
            <person name="Shah R."/>
            <person name="Swaby I.K."/>
            <person name="O'Shaughnessy A."/>
            <person name="Rodriguez M."/>
            <person name="Hoffman J."/>
            <person name="Till S."/>
            <person name="Granat S."/>
            <person name="Shohdy N."/>
            <person name="Hasegawa A."/>
            <person name="Hameed A."/>
            <person name="Lodhi M."/>
            <person name="Johnson A."/>
            <person name="Chen E."/>
            <person name="Marra M.A."/>
            <person name="Martienssen R."/>
            <person name="McCombie W.R."/>
        </authorList>
    </citation>
    <scope>NUCLEOTIDE SEQUENCE [LARGE SCALE GENOMIC DNA]</scope>
    <source>
        <strain>cv. Columbia</strain>
    </source>
</reference>
<reference key="2">
    <citation type="journal article" date="2017" name="Plant J.">
        <title>Araport11: a complete reannotation of the Arabidopsis thaliana reference genome.</title>
        <authorList>
            <person name="Cheng C.Y."/>
            <person name="Krishnakumar V."/>
            <person name="Chan A.P."/>
            <person name="Thibaud-Nissen F."/>
            <person name="Schobel S."/>
            <person name="Town C.D."/>
        </authorList>
    </citation>
    <scope>GENOME REANNOTATION</scope>
    <source>
        <strain>cv. Columbia</strain>
    </source>
</reference>
<reference key="3">
    <citation type="journal article" date="2009" name="FEBS Lett.">
        <title>Gene expression and characterization of a stress-induced tyrosine decarboxylase from Arabidopsis thaliana.</title>
        <authorList>
            <person name="Lehmann T."/>
            <person name="Pollmann S."/>
        </authorList>
    </citation>
    <scope>FUNCTION</scope>
    <scope>CATALYTIC ACTIVITY</scope>
    <scope>COFACTOR</scope>
    <scope>BIOPHYSICOCHEMICAL PROPERTIES</scope>
    <scope>SUBUNIT</scope>
    <scope>SUBCELLULAR LOCATION</scope>
    <scope>INDUCTION</scope>
</reference>
<reference key="4">
    <citation type="journal article" date="2011" name="Plant J.">
        <title>Role of aromatic aldehyde synthase in wounding/herbivory response and flower scent production in different Arabidopsis ecotypes.</title>
        <authorList>
            <person name="Gutensohn M."/>
            <person name="Klempien A."/>
            <person name="Kaminaga Y."/>
            <person name="Nagegowda D.A."/>
            <person name="Negre-Zakharov F."/>
            <person name="Huh J.H."/>
            <person name="Luo H."/>
            <person name="Weizbauer R."/>
            <person name="Mengiste T."/>
            <person name="Tholl D."/>
            <person name="Dudareva N."/>
        </authorList>
    </citation>
    <scope>FUNCTION</scope>
    <scope>TISSUE SPECIFICITY</scope>
    <scope>DISRUPTION PHENOTYPE</scope>
</reference>
<protein>
    <recommendedName>
        <fullName evidence="7">Tyrosine decarboxylase 2</fullName>
        <shortName evidence="6">AtTYDC</shortName>
        <ecNumber evidence="3">4.1.1.25</ecNumber>
    </recommendedName>
    <alternativeName>
        <fullName evidence="5">TyrDC-like protein</fullName>
    </alternativeName>
</protein>
<organism>
    <name type="scientific">Arabidopsis thaliana</name>
    <name type="common">Mouse-ear cress</name>
    <dbReference type="NCBI Taxonomy" id="3702"/>
    <lineage>
        <taxon>Eukaryota</taxon>
        <taxon>Viridiplantae</taxon>
        <taxon>Streptophyta</taxon>
        <taxon>Embryophyta</taxon>
        <taxon>Tracheophyta</taxon>
        <taxon>Spermatophyta</taxon>
        <taxon>Magnoliopsida</taxon>
        <taxon>eudicotyledons</taxon>
        <taxon>Gunneridae</taxon>
        <taxon>Pentapetalae</taxon>
        <taxon>rosids</taxon>
        <taxon>malvids</taxon>
        <taxon>Brassicales</taxon>
        <taxon>Brassicaceae</taxon>
        <taxon>Camelineae</taxon>
        <taxon>Arabidopsis</taxon>
    </lineage>
</organism>
<keyword id="KW-0025">Alternative splicing</keyword>
<keyword id="KW-0963">Cytoplasm</keyword>
<keyword id="KW-0210">Decarboxylase</keyword>
<keyword id="KW-0456">Lyase</keyword>
<keyword id="KW-0663">Pyridoxal phosphate</keyword>
<keyword id="KW-1185">Reference proteome</keyword>
<evidence type="ECO:0000250" key="1">
    <source>
        <dbReference type="UniProtKB" id="O82415"/>
    </source>
</evidence>
<evidence type="ECO:0000256" key="2">
    <source>
        <dbReference type="SAM" id="MobiDB-lite"/>
    </source>
</evidence>
<evidence type="ECO:0000269" key="3">
    <source>
    </source>
</evidence>
<evidence type="ECO:0000269" key="4">
    <source>
    </source>
</evidence>
<evidence type="ECO:0000303" key="5">
    <source>
    </source>
</evidence>
<evidence type="ECO:0000303" key="6">
    <source>
    </source>
</evidence>
<evidence type="ECO:0000305" key="7"/>
<evidence type="ECO:0000312" key="8">
    <source>
        <dbReference type="Araport" id="AT4G28680"/>
    </source>
</evidence>
<evidence type="ECO:0000312" key="9">
    <source>
        <dbReference type="EMBL" id="CAB81456.1"/>
    </source>
</evidence>
<comment type="function">
    <text evidence="3 4">Converts tyrosine into tyramine, a precursor of isoquinoline alkaloids and various amides.</text>
</comment>
<comment type="catalytic activity">
    <reaction evidence="3">
        <text>L-tyrosine + H(+) = tyramine + CO2</text>
        <dbReference type="Rhea" id="RHEA:14345"/>
        <dbReference type="ChEBI" id="CHEBI:15378"/>
        <dbReference type="ChEBI" id="CHEBI:16526"/>
        <dbReference type="ChEBI" id="CHEBI:58315"/>
        <dbReference type="ChEBI" id="CHEBI:327995"/>
        <dbReference type="EC" id="4.1.1.25"/>
    </reaction>
    <physiologicalReaction direction="left-to-right" evidence="3">
        <dbReference type="Rhea" id="RHEA:14346"/>
    </physiologicalReaction>
</comment>
<comment type="cofactor">
    <cofactor evidence="3">
        <name>pyridoxal 5'-phosphate</name>
        <dbReference type="ChEBI" id="CHEBI:597326"/>
    </cofactor>
</comment>
<comment type="biophysicochemical properties">
    <kinetics>
        <KM evidence="3">745 uM for L-tyrosine</KM>
        <Vmax evidence="3">61.35 nmol/sec/mg enzyme with L-tyrosine as substrate</Vmax>
    </kinetics>
</comment>
<comment type="subunit">
    <text evidence="3">Homotetramer.</text>
</comment>
<comment type="subcellular location">
    <subcellularLocation>
        <location evidence="3">Cytoplasm</location>
    </subcellularLocation>
</comment>
<comment type="alternative products">
    <event type="alternative splicing"/>
    <isoform>
        <id>Q9M0G4-1</id>
        <name>1</name>
        <sequence type="displayed"/>
    </isoform>
    <text>A number of isoforms are produced. According to EST sequences.</text>
</comment>
<comment type="tissue specificity">
    <text evidence="4">Expressed specifically in flowers.</text>
</comment>
<comment type="induction">
    <text evidence="3">Induced by drougt stress, wounding and methyl jasmonate.</text>
</comment>
<comment type="disruption phenotype">
    <text evidence="4">Slight reduction of pollen grain size.</text>
</comment>
<comment type="similarity">
    <text evidence="7">Belongs to the group II decarboxylase family.</text>
</comment>
<feature type="chain" id="PRO_0000146994" description="Tyrosine decarboxylase 2">
    <location>
        <begin position="1"/>
        <end position="545"/>
    </location>
</feature>
<feature type="region of interest" description="Disordered" evidence="2">
    <location>
        <begin position="23"/>
        <end position="45"/>
    </location>
</feature>
<feature type="compositionally biased region" description="Gly residues" evidence="2">
    <location>
        <begin position="23"/>
        <end position="44"/>
    </location>
</feature>
<feature type="binding site" evidence="1">
    <location>
        <position position="245"/>
    </location>
    <ligand>
        <name>L-tyrosine</name>
        <dbReference type="ChEBI" id="CHEBI:58315"/>
    </ligand>
</feature>
<feature type="binding site" evidence="1">
    <location>
        <position position="360"/>
    </location>
    <ligand>
        <name>L-tyrosine</name>
        <dbReference type="ChEBI" id="CHEBI:58315"/>
    </ligand>
</feature>
<feature type="binding site" evidence="1">
    <location>
        <position position="390"/>
    </location>
    <ligand>
        <name>L-tyrosine</name>
        <dbReference type="ChEBI" id="CHEBI:58315"/>
    </ligand>
</feature>
<feature type="modified residue" description="N6-(pyridoxal phosphate)lysine" evidence="1">
    <location>
        <position position="361"/>
    </location>
</feature>
<dbReference type="EC" id="4.1.1.25" evidence="3"/>
<dbReference type="EMBL" id="AL049917">
    <property type="status" value="NOT_ANNOTATED_CDS"/>
    <property type="molecule type" value="Genomic_DNA"/>
</dbReference>
<dbReference type="EMBL" id="AL161573">
    <property type="protein sequence ID" value="CAB81456.1"/>
    <property type="molecule type" value="Genomic_DNA"/>
</dbReference>
<dbReference type="EMBL" id="CP002687">
    <property type="protein sequence ID" value="AEE85522.1"/>
    <property type="molecule type" value="Genomic_DNA"/>
</dbReference>
<dbReference type="PIR" id="T10662">
    <property type="entry name" value="T10662"/>
</dbReference>
<dbReference type="RefSeq" id="NP_194597.1">
    <molecule id="Q9M0G4-1"/>
    <property type="nucleotide sequence ID" value="NM_119010.3"/>
</dbReference>
<dbReference type="SMR" id="Q9M0G4"/>
<dbReference type="FunCoup" id="Q9M0G4">
    <property type="interactions" value="138"/>
</dbReference>
<dbReference type="STRING" id="3702.Q9M0G4"/>
<dbReference type="PaxDb" id="3702-AT4G28680.3"/>
<dbReference type="EnsemblPlants" id="AT4G28680.1">
    <molecule id="Q9M0G4-1"/>
    <property type="protein sequence ID" value="AT4G28680.1"/>
    <property type="gene ID" value="AT4G28680"/>
</dbReference>
<dbReference type="GeneID" id="828986"/>
<dbReference type="Gramene" id="AT4G28680.1">
    <molecule id="Q9M0G4-1"/>
    <property type="protein sequence ID" value="AT4G28680.1"/>
    <property type="gene ID" value="AT4G28680"/>
</dbReference>
<dbReference type="KEGG" id="ath:AT4G28680"/>
<dbReference type="Araport" id="AT4G28680"/>
<dbReference type="TAIR" id="AT4G28680">
    <property type="gene designation" value="TYRDC"/>
</dbReference>
<dbReference type="eggNOG" id="KOG0628">
    <property type="taxonomic scope" value="Eukaryota"/>
</dbReference>
<dbReference type="HOGENOM" id="CLU_011856_3_1_1"/>
<dbReference type="InParanoid" id="Q9M0G4"/>
<dbReference type="OrthoDB" id="639767at2759"/>
<dbReference type="PhylomeDB" id="Q9M0G4"/>
<dbReference type="BioCyc" id="ARA:AT4G28680-MONOMER"/>
<dbReference type="PRO" id="PR:Q9M0G4"/>
<dbReference type="Proteomes" id="UP000006548">
    <property type="component" value="Chromosome 4"/>
</dbReference>
<dbReference type="ExpressionAtlas" id="Q9M0G4">
    <property type="expression patterns" value="baseline and differential"/>
</dbReference>
<dbReference type="GO" id="GO:0005737">
    <property type="term" value="C:cytoplasm"/>
    <property type="evidence" value="ECO:0007669"/>
    <property type="project" value="UniProtKB-SubCell"/>
</dbReference>
<dbReference type="GO" id="GO:0030170">
    <property type="term" value="F:pyridoxal phosphate binding"/>
    <property type="evidence" value="ECO:0007669"/>
    <property type="project" value="InterPro"/>
</dbReference>
<dbReference type="GO" id="GO:0004837">
    <property type="term" value="F:tyrosine decarboxylase activity"/>
    <property type="evidence" value="ECO:0007669"/>
    <property type="project" value="UniProtKB-EC"/>
</dbReference>
<dbReference type="GO" id="GO:0006520">
    <property type="term" value="P:amino acid metabolic process"/>
    <property type="evidence" value="ECO:0007669"/>
    <property type="project" value="InterPro"/>
</dbReference>
<dbReference type="GO" id="GO:0019752">
    <property type="term" value="P:carboxylic acid metabolic process"/>
    <property type="evidence" value="ECO:0007669"/>
    <property type="project" value="InterPro"/>
</dbReference>
<dbReference type="CDD" id="cd06450">
    <property type="entry name" value="DOPA_deC_like"/>
    <property type="match status" value="1"/>
</dbReference>
<dbReference type="FunFam" id="1.20.1340.10:FF:000001">
    <property type="entry name" value="Histidine decarboxylase"/>
    <property type="match status" value="1"/>
</dbReference>
<dbReference type="FunFam" id="3.40.640.10:FF:000025">
    <property type="entry name" value="Histidine decarboxylase"/>
    <property type="match status" value="1"/>
</dbReference>
<dbReference type="FunFam" id="3.90.1150.10:FF:000018">
    <property type="entry name" value="Histidine decarboxylase"/>
    <property type="match status" value="1"/>
</dbReference>
<dbReference type="Gene3D" id="3.90.1150.10">
    <property type="entry name" value="Aspartate Aminotransferase, domain 1"/>
    <property type="match status" value="1"/>
</dbReference>
<dbReference type="Gene3D" id="1.20.1340.10">
    <property type="entry name" value="dopa decarboxylase, N-terminal domain"/>
    <property type="match status" value="1"/>
</dbReference>
<dbReference type="Gene3D" id="3.40.640.10">
    <property type="entry name" value="Type I PLP-dependent aspartate aminotransferase-like (Major domain)"/>
    <property type="match status" value="1"/>
</dbReference>
<dbReference type="InterPro" id="IPR010977">
    <property type="entry name" value="Aromatic_deC"/>
</dbReference>
<dbReference type="InterPro" id="IPR002129">
    <property type="entry name" value="PyrdxlP-dep_de-COase"/>
</dbReference>
<dbReference type="InterPro" id="IPR015424">
    <property type="entry name" value="PyrdxlP-dep_Trfase"/>
</dbReference>
<dbReference type="InterPro" id="IPR015421">
    <property type="entry name" value="PyrdxlP-dep_Trfase_major"/>
</dbReference>
<dbReference type="InterPro" id="IPR015422">
    <property type="entry name" value="PyrdxlP-dep_Trfase_small"/>
</dbReference>
<dbReference type="PANTHER" id="PTHR11999">
    <property type="entry name" value="GROUP II PYRIDOXAL-5-PHOSPHATE DECARBOXYLASE"/>
    <property type="match status" value="1"/>
</dbReference>
<dbReference type="PANTHER" id="PTHR11999:SF152">
    <property type="entry name" value="TYROSINE DECARBOXYLASE 2"/>
    <property type="match status" value="1"/>
</dbReference>
<dbReference type="Pfam" id="PF00282">
    <property type="entry name" value="Pyridoxal_deC"/>
    <property type="match status" value="1"/>
</dbReference>
<dbReference type="PRINTS" id="PR00800">
    <property type="entry name" value="YHDCRBOXLASE"/>
</dbReference>
<dbReference type="SUPFAM" id="SSF53383">
    <property type="entry name" value="PLP-dependent transferases"/>
    <property type="match status" value="1"/>
</dbReference>
<proteinExistence type="evidence at protein level"/>
<name>TYDC2_ARATH</name>
<gene>
    <name evidence="5" type="primary">TYRDC</name>
    <name evidence="6" type="synonym">TYDC</name>
    <name evidence="8" type="ordered locus">At4g28680</name>
    <name evidence="9" type="ORF">T5F17.130</name>
</gene>
<sequence>MFKPQHMYDREFGTGNGYSNGNGYTNGNGHTNGNGNYNGNGHVNGNGKANGAKVVKMKPMDSELLREQGHIMVDFIADYYKNLQDSPQDFPVLSQVQPGYLRDMLPDSAPERPESLKELLDDVSKKIMPGITHWQSPSYFAYYASSTSVAGFLGEMLNAGLSVVGFTWLTSPAATELEIIVLDWLAKLLQLPDHFLSTGNGGGVIQGTGCEAVLVVVLAARDRILKKVGKTLLPQLVVYGSDQTHSSFRKACLIGGIHEENIRLLKTDSSTNYGMPPESLEEAISHDLAKGFIPFFICATVGTTSSAAVDPLVPLGNIAKKYGIWLHVDAAYAGNACICPEYRKFIDGIENADSFNMNAHKWLFANQTCSPLWVKDRYSLIDALKTNPEYLEFKVSKKDTVVNYKDWQISLSRRFRSLKLWMVLRLYGSENLRNFIRDHVNLAKHFEDYVAQDPSFEVVTTRYFSLVCFRLAPVDGDEDQCNERNRELLAAVNSTGKIFISHTALSGKFVLRFAVGAPLTEEKHVTEAWQIIQKHASKFTRNDHY</sequence>
<accession>Q9M0G4</accession>